<accession>P23562</accession>
<reference key="1">
    <citation type="journal article" date="1989" name="J. Biol. Chem.">
        <title>Primary structure of the rat kidney band 3 anion exchange protein deduced from a cDNA.</title>
        <authorList>
            <person name="Kudrycki K.E."/>
            <person name="Shull G.E."/>
        </authorList>
    </citation>
    <scope>NUCLEOTIDE SEQUENCE [GENOMIC DNA] OF 46-927</scope>
    <scope>TISSUE SPECIFICITY</scope>
    <source>
        <tissue>Kidney</tissue>
    </source>
</reference>
<reference key="2">
    <citation type="journal article" date="1993" name="Am. J. Physiol.">
        <title>Rat kidney band 3 Cl-/HCO3- exchanger mRNA is transcribed from an alternative promoter.</title>
        <authorList>
            <person name="Kudrycki K.E."/>
            <person name="Shull G.E."/>
        </authorList>
    </citation>
    <scope>NUCLEOTIDE SEQUENCE [MRNA] OF 1-45</scope>
</reference>
<reference key="3">
    <citation type="journal article" date="2012" name="Nat. Commun.">
        <title>Quantitative maps of protein phosphorylation sites across 14 different rat organs and tissues.</title>
        <authorList>
            <person name="Lundby A."/>
            <person name="Secher A."/>
            <person name="Lage K."/>
            <person name="Nordsborg N.B."/>
            <person name="Dmytriyev A."/>
            <person name="Lundby C."/>
            <person name="Olsen J.V."/>
        </authorList>
    </citation>
    <scope>PHOSPHORYLATION [LARGE SCALE ANALYSIS] AT SER-18; SER-199 AND SER-222</scope>
    <scope>IDENTIFICATION BY MASS SPECTROMETRY [LARGE SCALE ANALYSIS]</scope>
</reference>
<keyword id="KW-0007">Acetylation</keyword>
<keyword id="KW-0025">Alternative splicing</keyword>
<keyword id="KW-0039">Anion exchange</keyword>
<keyword id="KW-1003">Cell membrane</keyword>
<keyword id="KW-0325">Glycoprotein</keyword>
<keyword id="KW-0406">Ion transport</keyword>
<keyword id="KW-0449">Lipoprotein</keyword>
<keyword id="KW-0472">Membrane</keyword>
<keyword id="KW-0564">Palmitate</keyword>
<keyword id="KW-0597">Phosphoprotein</keyword>
<keyword id="KW-1185">Reference proteome</keyword>
<keyword id="KW-0812">Transmembrane</keyword>
<keyword id="KW-1133">Transmembrane helix</keyword>
<keyword id="KW-0813">Transport</keyword>
<organism>
    <name type="scientific">Rattus norvegicus</name>
    <name type="common">Rat</name>
    <dbReference type="NCBI Taxonomy" id="10116"/>
    <lineage>
        <taxon>Eukaryota</taxon>
        <taxon>Metazoa</taxon>
        <taxon>Chordata</taxon>
        <taxon>Craniata</taxon>
        <taxon>Vertebrata</taxon>
        <taxon>Euteleostomi</taxon>
        <taxon>Mammalia</taxon>
        <taxon>Eutheria</taxon>
        <taxon>Euarchontoglires</taxon>
        <taxon>Glires</taxon>
        <taxon>Rodentia</taxon>
        <taxon>Myomorpha</taxon>
        <taxon>Muroidea</taxon>
        <taxon>Muridae</taxon>
        <taxon>Murinae</taxon>
        <taxon>Rattus</taxon>
    </lineage>
</organism>
<protein>
    <recommendedName>
        <fullName>Band 3 anion transport protein</fullName>
    </recommendedName>
    <alternativeName>
        <fullName evidence="5">Anion exchange protein 1</fullName>
        <shortName>AE 1</shortName>
        <shortName>Anion exchanger 1</shortName>
    </alternativeName>
    <alternativeName>
        <fullName>Solute carrier family 4 member 1</fullName>
    </alternativeName>
    <cdAntigenName>CD233</cdAntigenName>
</protein>
<feature type="chain" id="PRO_0000079211" description="Band 3 anion transport protein">
    <location>
        <begin position="1"/>
        <end position="927"/>
    </location>
</feature>
<feature type="topological domain" description="Cytoplasmic" evidence="2">
    <location>
        <begin position="1"/>
        <end position="420"/>
    </location>
</feature>
<feature type="transmembrane region" description="Helical; Name=1" evidence="2">
    <location>
        <begin position="421"/>
        <end position="444"/>
    </location>
</feature>
<feature type="topological domain" description="Extracellular" evidence="2">
    <location>
        <begin position="445"/>
        <end position="452"/>
    </location>
</feature>
<feature type="transmembrane region" description="Helical; Name=2" evidence="2">
    <location>
        <begin position="453"/>
        <end position="473"/>
    </location>
</feature>
<feature type="topological domain" description="Cytoplasmic" evidence="2">
    <location>
        <begin position="474"/>
        <end position="476"/>
    </location>
</feature>
<feature type="transmembrane region" description="Discontinuously helical; Name=3" evidence="2">
    <location>
        <begin position="477"/>
        <end position="493"/>
    </location>
</feature>
<feature type="topological domain" description="Extracellular" evidence="2">
    <location>
        <begin position="494"/>
        <end position="502"/>
    </location>
</feature>
<feature type="transmembrane region" description="Helical; Name=4" evidence="2">
    <location>
        <begin position="503"/>
        <end position="523"/>
    </location>
</feature>
<feature type="topological domain" description="Cytoplasmic" evidence="2">
    <location>
        <begin position="524"/>
        <end position="535"/>
    </location>
</feature>
<feature type="transmembrane region" description="Helical; Name=5" evidence="2">
    <location>
        <begin position="536"/>
        <end position="558"/>
    </location>
</feature>
<feature type="topological domain" description="Extracellular" evidence="2">
    <location>
        <begin position="559"/>
        <end position="586"/>
    </location>
</feature>
<feature type="transmembrane region" description="Helical; Name=6" evidence="2">
    <location>
        <begin position="587"/>
        <end position="607"/>
    </location>
</feature>
<feature type="topological domain" description="Cytoplasmic" evidence="2">
    <location>
        <begin position="608"/>
        <end position="618"/>
    </location>
</feature>
<feature type="transmembrane region" description="Helical; Name=7" evidence="2">
    <location>
        <begin position="619"/>
        <end position="639"/>
    </location>
</feature>
<feature type="topological domain" description="Extracellular" evidence="2">
    <location>
        <begin position="640"/>
        <end position="679"/>
    </location>
</feature>
<feature type="transmembrane region" description="Helical; Name=8" evidence="2">
    <location>
        <begin position="680"/>
        <end position="700"/>
    </location>
</feature>
<feature type="topological domain" description="Cytoplasmic" evidence="2">
    <location>
        <begin position="701"/>
        <end position="716"/>
    </location>
</feature>
<feature type="transmembrane region" description="Helical; Name=9" evidence="2">
    <location>
        <begin position="717"/>
        <end position="735"/>
    </location>
</feature>
<feature type="transmembrane region" description="Discontinuously helical; Name=10" evidence="2">
    <location>
        <begin position="736"/>
        <end position="753"/>
    </location>
</feature>
<feature type="topological domain" description="Cytoplasmic" evidence="2">
    <location>
        <begin position="754"/>
        <end position="776"/>
    </location>
</feature>
<feature type="transmembrane region" description="Helical; Name=11" evidence="2">
    <location>
        <begin position="777"/>
        <end position="797"/>
    </location>
</feature>
<feature type="transmembrane region" description="Helical; Name=12" evidence="2">
    <location>
        <begin position="798"/>
        <end position="816"/>
    </location>
</feature>
<feature type="topological domain" description="Cytoplasmic" evidence="2">
    <location>
        <begin position="817"/>
        <end position="854"/>
    </location>
</feature>
<feature type="intramembrane region" description="Discontinuously helical" evidence="2">
    <location>
        <begin position="855"/>
        <end position="885"/>
    </location>
</feature>
<feature type="topological domain" description="Cytoplasmic" evidence="2">
    <location>
        <begin position="886"/>
        <end position="927"/>
    </location>
</feature>
<feature type="region of interest" description="Globular" evidence="1">
    <location>
        <begin position="69"/>
        <end position="303"/>
    </location>
</feature>
<feature type="region of interest" description="Interaction with ANK1" evidence="1">
    <location>
        <begin position="190"/>
        <end position="199"/>
    </location>
</feature>
<feature type="region of interest" description="Dimerization arm" evidence="1">
    <location>
        <begin position="317"/>
        <end position="370"/>
    </location>
</feature>
<feature type="region of interest" description="Disordered" evidence="3">
    <location>
        <begin position="367"/>
        <end position="390"/>
    </location>
</feature>
<feature type="modified residue" description="N-acetylmethionine" evidence="2">
    <location>
        <position position="1"/>
    </location>
</feature>
<feature type="modified residue" description="Phosphoserine" evidence="7">
    <location>
        <position position="18"/>
    </location>
</feature>
<feature type="modified residue" description="Phosphotyrosine" evidence="2">
    <location>
        <position position="31"/>
    </location>
</feature>
<feature type="modified residue" description="Phosphotyrosine" evidence="2">
    <location>
        <position position="56"/>
    </location>
</feature>
<feature type="modified residue" description="Phosphoserine" evidence="7">
    <location>
        <position position="199"/>
    </location>
</feature>
<feature type="modified residue" description="Phosphoserine" evidence="7">
    <location>
        <position position="222"/>
    </location>
</feature>
<feature type="modified residue" description="Phosphotyrosine" evidence="2">
    <location>
        <position position="372"/>
    </location>
</feature>
<feature type="modified residue" description="Phosphotyrosine" evidence="2">
    <location>
        <position position="920"/>
    </location>
</feature>
<feature type="lipid moiety-binding region" description="S-palmitoyl cysteine" evidence="1">
    <location>
        <position position="859"/>
    </location>
</feature>
<feature type="glycosylation site" description="N-linked (GlcNAc...) asparagine" evidence="5">
    <location>
        <position position="658"/>
    </location>
</feature>
<feature type="splice variant" id="VSP_000455" description="In isoform 2." evidence="5">
    <location>
        <begin position="1"/>
        <end position="79"/>
    </location>
</feature>
<gene>
    <name evidence="6" type="primary">Slc4a1</name>
    <name type="synonym">Ae1</name>
</gene>
<sequence>MGDMQDHEKVLEIPDRDSEEELEHVIEQIAYRDLDIPVTEMQESEALPTEQTATDYIPTSTSTSHPSSSQVYVELQELMMDQRNQELQWVEAAHWIGLEENLREDGVWGRPHLSYLTFWSLLELQKVFSKGTFLLDLAETSLAGVANKLLDSFIYEDQIRPQDRDELLRALLLKRSHAEDLKDLEGVKPAVLTRSGAPSEPLLPHQPSLETKLYCAQAEGGSEEPSPSGILKIPPNSETTLVLVGRASFLVKPVLGFVRLKEAVPLEDLVLPEPVSFLLVLLGPEAPHIDYTQLGRAAATLMTERVFRVTASLAQSRGELLSSLDSFLDCSLVLPPTEAPSEKALLNLVPVQKELLRKRYLPRPAKPDPNLYEALDGGKEGPGDEDDPLRRTGRIFGGLIRDIRRRYPYYLSDITDALSPQVLAAVIFIYFAALSPAVTFGGLLGEKTRNLMGVSELLISTAVQGILFALLGAQPLLVLGFSGPLLVFEEAFYSFCESNNLEYIVGRAWIGFWLILLVVLVVAFEGSFLVQYISRYTQEIFSFLISLIFIYETFSKLIKIFQDYPLQESYAPVVMKPKPQGPVPNTALLSLVLMVGTFLLAMMLRKFKNSTYFPGKLRRVIGDFGVPISILIMVLVDTFIKNTYTQKLSVPDGLKVSNSSARGWVIHPLGLYNHFPKWMMFASVLPALLVFILIFLESQITTLIVSKPERKMIKGSGFHLDLLLVVGMGGVAALFGMPWLSATTVRSVTHANALTVMGKASGPGAAAQIQEVKEQRISGLLVSVLVGLSILMEPILSRIPLAVLFGIFLYMGITSLSGIQLFDRILLLFKPPKYHPDVPFVKRVKTWRMHLFTGIQIICLAVLWVVKSTPASLALPFVLILTVPLRRLLLPLIFRELELQCLDGDDAKVTFDEAEGLDEYDEVPMPV</sequence>
<evidence type="ECO:0000250" key="1"/>
<evidence type="ECO:0000250" key="2">
    <source>
        <dbReference type="UniProtKB" id="P02730"/>
    </source>
</evidence>
<evidence type="ECO:0000256" key="3">
    <source>
        <dbReference type="SAM" id="MobiDB-lite"/>
    </source>
</evidence>
<evidence type="ECO:0000269" key="4">
    <source>
    </source>
</evidence>
<evidence type="ECO:0000305" key="5"/>
<evidence type="ECO:0000312" key="6">
    <source>
        <dbReference type="RGD" id="3710"/>
    </source>
</evidence>
<evidence type="ECO:0007744" key="7">
    <source>
    </source>
</evidence>
<name>B3AT_RAT</name>
<proteinExistence type="evidence at protein level"/>
<dbReference type="EMBL" id="J04793">
    <property type="protein sequence ID" value="AAA40800.1"/>
    <property type="status" value="ALT_INIT"/>
    <property type="molecule type" value="Genomic_DNA"/>
</dbReference>
<dbReference type="EMBL" id="L02943">
    <property type="protein sequence ID" value="AAA40801.1"/>
    <property type="molecule type" value="mRNA"/>
</dbReference>
<dbReference type="PIR" id="A33810">
    <property type="entry name" value="A33810"/>
</dbReference>
<dbReference type="PIR" id="A48854">
    <property type="entry name" value="A48854"/>
</dbReference>
<dbReference type="RefSeq" id="NP_036783.2">
    <property type="nucleotide sequence ID" value="NM_012651.2"/>
</dbReference>
<dbReference type="RefSeq" id="XP_008766168.1">
    <molecule id="P23562-1"/>
    <property type="nucleotide sequence ID" value="XM_008767946.4"/>
</dbReference>
<dbReference type="SMR" id="P23562"/>
<dbReference type="FunCoup" id="P23562">
    <property type="interactions" value="161"/>
</dbReference>
<dbReference type="IntAct" id="P23562">
    <property type="interactions" value="1"/>
</dbReference>
<dbReference type="STRING" id="10116.ENSRNOP00000028445"/>
<dbReference type="GlyCosmos" id="P23562">
    <property type="glycosylation" value="1 site, No reported glycans"/>
</dbReference>
<dbReference type="GlyGen" id="P23562">
    <property type="glycosylation" value="1 site"/>
</dbReference>
<dbReference type="iPTMnet" id="P23562"/>
<dbReference type="PhosphoSitePlus" id="P23562"/>
<dbReference type="SwissPalm" id="P23562"/>
<dbReference type="PaxDb" id="10116-ENSRNOP00000028445"/>
<dbReference type="PeptideAtlas" id="P23562"/>
<dbReference type="GeneID" id="24779"/>
<dbReference type="KEGG" id="rno:24779"/>
<dbReference type="UCSC" id="RGD:3710">
    <molecule id="P23562-1"/>
    <property type="organism name" value="rat"/>
</dbReference>
<dbReference type="AGR" id="RGD:3710"/>
<dbReference type="CTD" id="6521"/>
<dbReference type="RGD" id="3710">
    <property type="gene designation" value="Slc4a1"/>
</dbReference>
<dbReference type="eggNOG" id="KOG1172">
    <property type="taxonomic scope" value="Eukaryota"/>
</dbReference>
<dbReference type="InParanoid" id="P23562"/>
<dbReference type="OrthoDB" id="64452at9989"/>
<dbReference type="PhylomeDB" id="P23562"/>
<dbReference type="Reactome" id="R-RNO-1237044">
    <property type="pathway name" value="Erythrocytes take up carbon dioxide and release oxygen"/>
</dbReference>
<dbReference type="Reactome" id="R-RNO-1247673">
    <property type="pathway name" value="Erythrocytes take up oxygen and release carbon dioxide"/>
</dbReference>
<dbReference type="Reactome" id="R-RNO-425381">
    <property type="pathway name" value="Bicarbonate transporters"/>
</dbReference>
<dbReference type="PRO" id="PR:P23562"/>
<dbReference type="Proteomes" id="UP000002494">
    <property type="component" value="Unplaced"/>
</dbReference>
<dbReference type="GO" id="GO:0170014">
    <property type="term" value="C:ankyrin-1 complex"/>
    <property type="evidence" value="ECO:0000250"/>
    <property type="project" value="UniProtKB"/>
</dbReference>
<dbReference type="GO" id="GO:0016323">
    <property type="term" value="C:basolateral plasma membrane"/>
    <property type="evidence" value="ECO:0000314"/>
    <property type="project" value="UniProtKB"/>
</dbReference>
<dbReference type="GO" id="GO:0009986">
    <property type="term" value="C:cell surface"/>
    <property type="evidence" value="ECO:0000314"/>
    <property type="project" value="RGD"/>
</dbReference>
<dbReference type="GO" id="GO:0030863">
    <property type="term" value="C:cortical cytoskeleton"/>
    <property type="evidence" value="ECO:0000250"/>
    <property type="project" value="UniProtKB"/>
</dbReference>
<dbReference type="GO" id="GO:0009898">
    <property type="term" value="C:cytoplasmic side of plasma membrane"/>
    <property type="evidence" value="ECO:0000266"/>
    <property type="project" value="RGD"/>
</dbReference>
<dbReference type="GO" id="GO:0014704">
    <property type="term" value="C:intercalated disc"/>
    <property type="evidence" value="ECO:0000314"/>
    <property type="project" value="RGD"/>
</dbReference>
<dbReference type="GO" id="GO:0016020">
    <property type="term" value="C:membrane"/>
    <property type="evidence" value="ECO:0000266"/>
    <property type="project" value="RGD"/>
</dbReference>
<dbReference type="GO" id="GO:0005886">
    <property type="term" value="C:plasma membrane"/>
    <property type="evidence" value="ECO:0000250"/>
    <property type="project" value="UniProtKB"/>
</dbReference>
<dbReference type="GO" id="GO:0030018">
    <property type="term" value="C:Z disc"/>
    <property type="evidence" value="ECO:0000314"/>
    <property type="project" value="RGD"/>
</dbReference>
<dbReference type="GO" id="GO:0003779">
    <property type="term" value="F:actin binding"/>
    <property type="evidence" value="ECO:0000353"/>
    <property type="project" value="RGD"/>
</dbReference>
<dbReference type="GO" id="GO:0030506">
    <property type="term" value="F:ankyrin binding"/>
    <property type="evidence" value="ECO:0000266"/>
    <property type="project" value="RGD"/>
</dbReference>
<dbReference type="GO" id="GO:0015106">
    <property type="term" value="F:bicarbonate transmembrane transporter activity"/>
    <property type="evidence" value="ECO:0000250"/>
    <property type="project" value="UniProtKB"/>
</dbReference>
<dbReference type="GO" id="GO:0015108">
    <property type="term" value="F:chloride transmembrane transporter activity"/>
    <property type="evidence" value="ECO:0000250"/>
    <property type="project" value="UniProtKB"/>
</dbReference>
<dbReference type="GO" id="GO:0140900">
    <property type="term" value="F:chloride:bicarbonate antiporter activity"/>
    <property type="evidence" value="ECO:0000250"/>
    <property type="project" value="UniProtKB"/>
</dbReference>
<dbReference type="GO" id="GO:0019899">
    <property type="term" value="F:enzyme binding"/>
    <property type="evidence" value="ECO:0000353"/>
    <property type="project" value="RGD"/>
</dbReference>
<dbReference type="GO" id="GO:0030492">
    <property type="term" value="F:hemoglobin binding"/>
    <property type="evidence" value="ECO:0000266"/>
    <property type="project" value="RGD"/>
</dbReference>
<dbReference type="GO" id="GO:0042803">
    <property type="term" value="F:protein homodimerization activity"/>
    <property type="evidence" value="ECO:0000266"/>
    <property type="project" value="RGD"/>
</dbReference>
<dbReference type="GO" id="GO:0044877">
    <property type="term" value="F:protein-containing complex binding"/>
    <property type="evidence" value="ECO:0000314"/>
    <property type="project" value="RGD"/>
</dbReference>
<dbReference type="GO" id="GO:0005452">
    <property type="term" value="F:solute:inorganic anion antiporter activity"/>
    <property type="evidence" value="ECO:0000250"/>
    <property type="project" value="UniProtKB"/>
</dbReference>
<dbReference type="GO" id="GO:0015701">
    <property type="term" value="P:bicarbonate transport"/>
    <property type="evidence" value="ECO:0000250"/>
    <property type="project" value="UniProtKB"/>
</dbReference>
<dbReference type="GO" id="GO:0007596">
    <property type="term" value="P:blood coagulation"/>
    <property type="evidence" value="ECO:0000266"/>
    <property type="project" value="RGD"/>
</dbReference>
<dbReference type="GO" id="GO:1902476">
    <property type="term" value="P:chloride transmembrane transport"/>
    <property type="evidence" value="ECO:0000250"/>
    <property type="project" value="UniProtKB"/>
</dbReference>
<dbReference type="GO" id="GO:0006821">
    <property type="term" value="P:chloride transport"/>
    <property type="evidence" value="ECO:0000250"/>
    <property type="project" value="UniProtKB"/>
</dbReference>
<dbReference type="GO" id="GO:0007623">
    <property type="term" value="P:circadian rhythm"/>
    <property type="evidence" value="ECO:0000270"/>
    <property type="project" value="RGD"/>
</dbReference>
<dbReference type="GO" id="GO:0048821">
    <property type="term" value="P:erythrocyte development"/>
    <property type="evidence" value="ECO:0000266"/>
    <property type="project" value="RGD"/>
</dbReference>
<dbReference type="GO" id="GO:1904539">
    <property type="term" value="P:negative regulation of glycolytic process through fructose-6-phosphate"/>
    <property type="evidence" value="ECO:0000266"/>
    <property type="project" value="RGD"/>
</dbReference>
<dbReference type="GO" id="GO:0035811">
    <property type="term" value="P:negative regulation of urine volume"/>
    <property type="evidence" value="ECO:0000266"/>
    <property type="project" value="RGD"/>
</dbReference>
<dbReference type="GO" id="GO:0045852">
    <property type="term" value="P:pH elevation"/>
    <property type="evidence" value="ECO:0000266"/>
    <property type="project" value="RGD"/>
</dbReference>
<dbReference type="GO" id="GO:0017121">
    <property type="term" value="P:plasma membrane phospholipid scrambling"/>
    <property type="evidence" value="ECO:0000266"/>
    <property type="project" value="RGD"/>
</dbReference>
<dbReference type="GO" id="GO:0042102">
    <property type="term" value="P:positive regulation of T cell proliferation"/>
    <property type="evidence" value="ECO:0000314"/>
    <property type="project" value="RGD"/>
</dbReference>
<dbReference type="GO" id="GO:0072659">
    <property type="term" value="P:protein localization to plasma membrane"/>
    <property type="evidence" value="ECO:0000266"/>
    <property type="project" value="RGD"/>
</dbReference>
<dbReference type="GO" id="GO:0051453">
    <property type="term" value="P:regulation of intracellular pH"/>
    <property type="evidence" value="ECO:0000318"/>
    <property type="project" value="GO_Central"/>
</dbReference>
<dbReference type="GO" id="GO:0010447">
    <property type="term" value="P:response to acidic pH"/>
    <property type="evidence" value="ECO:0000270"/>
    <property type="project" value="RGD"/>
</dbReference>
<dbReference type="GO" id="GO:0014823">
    <property type="term" value="P:response to activity"/>
    <property type="evidence" value="ECO:0000314"/>
    <property type="project" value="RGD"/>
</dbReference>
<dbReference type="GO" id="GO:0010446">
    <property type="term" value="P:response to alkaline pH"/>
    <property type="evidence" value="ECO:0000270"/>
    <property type="project" value="RGD"/>
</dbReference>
<dbReference type="GO" id="GO:0046685">
    <property type="term" value="P:response to arsenic-containing substance"/>
    <property type="evidence" value="ECO:0000314"/>
    <property type="project" value="RGD"/>
</dbReference>
<dbReference type="GO" id="GO:0010037">
    <property type="term" value="P:response to carbon dioxide"/>
    <property type="evidence" value="ECO:0000314"/>
    <property type="project" value="RGD"/>
</dbReference>
<dbReference type="GO" id="GO:0042542">
    <property type="term" value="P:response to hydrogen peroxide"/>
    <property type="evidence" value="ECO:0000314"/>
    <property type="project" value="RGD"/>
</dbReference>
<dbReference type="GO" id="GO:0031667">
    <property type="term" value="P:response to nutrient levels"/>
    <property type="evidence" value="ECO:0000270"/>
    <property type="project" value="RGD"/>
</dbReference>
<dbReference type="GO" id="GO:0055085">
    <property type="term" value="P:transmembrane transport"/>
    <property type="evidence" value="ECO:0000318"/>
    <property type="project" value="GO_Central"/>
</dbReference>
<dbReference type="FunFam" id="1.10.287.570:FF:000001">
    <property type="entry name" value="Anion exchange protein"/>
    <property type="match status" value="1"/>
</dbReference>
<dbReference type="FunFam" id="3.40.930.10:FF:000015">
    <property type="entry name" value="Anion exchange protein"/>
    <property type="match status" value="1"/>
</dbReference>
<dbReference type="Gene3D" id="1.10.287.570">
    <property type="entry name" value="Helical hairpin bin"/>
    <property type="match status" value="1"/>
</dbReference>
<dbReference type="Gene3D" id="3.40.930.10">
    <property type="entry name" value="Mannitol-specific EII, Chain A"/>
    <property type="match status" value="1"/>
</dbReference>
<dbReference type="InterPro" id="IPR001717">
    <property type="entry name" value="Anion_exchange"/>
</dbReference>
<dbReference type="InterPro" id="IPR002977">
    <property type="entry name" value="Anion_exchange_1"/>
</dbReference>
<dbReference type="InterPro" id="IPR018241">
    <property type="entry name" value="Anion_exchange_CS"/>
</dbReference>
<dbReference type="InterPro" id="IPR013769">
    <property type="entry name" value="Band3_cytoplasmic_dom"/>
</dbReference>
<dbReference type="InterPro" id="IPR011531">
    <property type="entry name" value="HCO3_transpt-like_TM_dom"/>
</dbReference>
<dbReference type="InterPro" id="IPR003020">
    <property type="entry name" value="HCO3_transpt_euk"/>
</dbReference>
<dbReference type="InterPro" id="IPR016152">
    <property type="entry name" value="PTrfase/Anion_transptr"/>
</dbReference>
<dbReference type="NCBIfam" id="TIGR00834">
    <property type="entry name" value="ae"/>
    <property type="match status" value="1"/>
</dbReference>
<dbReference type="PANTHER" id="PTHR11453">
    <property type="entry name" value="ANION EXCHANGE PROTEIN"/>
    <property type="match status" value="1"/>
</dbReference>
<dbReference type="PANTHER" id="PTHR11453:SF12">
    <property type="entry name" value="BAND 3 ANION TRANSPORT PROTEIN"/>
    <property type="match status" value="1"/>
</dbReference>
<dbReference type="Pfam" id="PF07565">
    <property type="entry name" value="Band_3_cyto"/>
    <property type="match status" value="1"/>
</dbReference>
<dbReference type="Pfam" id="PF00955">
    <property type="entry name" value="HCO3_cotransp"/>
    <property type="match status" value="2"/>
</dbReference>
<dbReference type="PRINTS" id="PR00165">
    <property type="entry name" value="ANIONEXCHNGR"/>
</dbReference>
<dbReference type="PRINTS" id="PR01187">
    <property type="entry name" value="ANIONEXHNGR1"/>
</dbReference>
<dbReference type="PRINTS" id="PR01231">
    <property type="entry name" value="HCO3TRNSPORT"/>
</dbReference>
<dbReference type="SUPFAM" id="SSF55804">
    <property type="entry name" value="Phoshotransferase/anion transport protein"/>
    <property type="match status" value="1"/>
</dbReference>
<dbReference type="PROSITE" id="PS00219">
    <property type="entry name" value="ANION_EXCHANGER_1"/>
    <property type="match status" value="1"/>
</dbReference>
<dbReference type="PROSITE" id="PS00220">
    <property type="entry name" value="ANION_EXCHANGER_2"/>
    <property type="match status" value="1"/>
</dbReference>
<comment type="function">
    <text evidence="2">Functions both as a transporter that mediates electroneutral anion exchange across the cell membrane and as a structural protein. Component of the ankyrin-1 complex of the erythrocyte membrane; required for normal flexibility and stability of the erythrocyte membrane and for normal erythrocyte shape via the interactions of its cytoplasmic domain with cytoskeletal proteins, glycolytic enzymes, and hemoglobin. Functions as a transporter that mediates the 1:1 exchange of inorganic anions across the erythrocyte membrane. Mediates chloride-bicarbonate exchange in the kidney, and is required for normal acidification of the urine.</text>
</comment>
<comment type="catalytic activity">
    <reaction evidence="2">
        <text>hydrogencarbonate(in) + chloride(out) = hydrogencarbonate(out) + chloride(in)</text>
        <dbReference type="Rhea" id="RHEA:72363"/>
        <dbReference type="ChEBI" id="CHEBI:17544"/>
        <dbReference type="ChEBI" id="CHEBI:17996"/>
    </reaction>
</comment>
<comment type="subunit">
    <text evidence="2">A dimer in solution, but in its membrane environment, it exists primarily as a mixture of dimers and tetramers and spans the membrane asymmetrically. Component of the ankyrin-1 complex in the erythrocyte, composed of ANK1, RHCE, RHAG, SLC4A1, EPB42, GYPA, GYPB and AQP1. Interacts with STOM; this interaction positively regulates SLC4A1 activity. Interacts with GYPA; a GYPA monomer is bound at each end of the SLC4A1 dimer forming a heterotetramer. Three SLC4A1 dimers (Band 3-I, Band 3-II and Band 3-III) participates in the ankyrin-1 complex. Interacts (via the cytoplasmic domain) with EPB42; this interaction is mediated by the SLC4A1 Band 3-I dimer. Interacts (via the cytoplasmic domain) directly with ANK1; this interaction is mediated by the SLC4A1 Band 3-II and Band 3-III dimers.</text>
</comment>
<comment type="subunit">
    <molecule>Isoform 2</molecule>
    <text evidence="2">Interacts with TMEM139.</text>
</comment>
<comment type="subcellular location">
    <subcellularLocation>
        <location evidence="2">Cell membrane</location>
        <topology evidence="2">Multi-pass membrane protein</topology>
    </subcellularLocation>
    <subcellularLocation>
        <location evidence="2">Basolateral cell membrane</location>
        <topology evidence="2">Multi-pass membrane protein</topology>
    </subcellularLocation>
    <text evidence="2">Detected in the erythrocyte cell membrane and on the basolateral membrane of alpha-intercalated cells in the collecting duct in the kidney.</text>
</comment>
<comment type="alternative products">
    <event type="alternative splicing"/>
    <isoform>
        <id>P23562-1</id>
        <name>1</name>
        <name>Erythrocyte</name>
        <sequence type="displayed"/>
    </isoform>
    <isoform>
        <id>P23562-2</id>
        <name>2</name>
        <name>Kidney</name>
        <sequence type="described" ref="VSP_000455"/>
    </isoform>
</comment>
<comment type="tissue specificity">
    <text evidence="4">Kidney.</text>
</comment>
<comment type="similarity">
    <text evidence="5">Belongs to the anion exchanger (TC 2.A.31) family.</text>
</comment>
<comment type="sequence caution" evidence="5">
    <conflict type="erroneous initiation">
        <sequence resource="EMBL-CDS" id="AAA40800"/>
    </conflict>
    <text>Truncated N-terminus.</text>
</comment>